<dbReference type="EMBL" id="ABSV01002423">
    <property type="protein sequence ID" value="EDZ68697.1"/>
    <property type="molecule type" value="Genomic_DNA"/>
</dbReference>
<dbReference type="Proteomes" id="UP000008988">
    <property type="component" value="Unassembled WGS sequence"/>
</dbReference>
<dbReference type="GO" id="GO:0005739">
    <property type="term" value="C:mitochondrion"/>
    <property type="evidence" value="ECO:0007669"/>
    <property type="project" value="UniProtKB-SubCell"/>
</dbReference>
<dbReference type="GO" id="GO:0000002">
    <property type="term" value="P:mitochondrial genome maintenance"/>
    <property type="evidence" value="ECO:0007669"/>
    <property type="project" value="InterPro"/>
</dbReference>
<dbReference type="InterPro" id="IPR031415">
    <property type="entry name" value="Rrg8"/>
</dbReference>
<dbReference type="Pfam" id="PF17068">
    <property type="entry name" value="RRG8"/>
    <property type="match status" value="1"/>
</dbReference>
<reference key="1">
    <citation type="journal article" date="2008" name="FEMS Yeast Res.">
        <title>Comparative genome analysis of a Saccharomyces cerevisiae wine strain.</title>
        <authorList>
            <person name="Borneman A.R."/>
            <person name="Forgan A.H."/>
            <person name="Pretorius I.S."/>
            <person name="Chambers P.J."/>
        </authorList>
    </citation>
    <scope>NUCLEOTIDE SEQUENCE [LARGE SCALE GENOMIC DNA]</scope>
    <source>
        <strain>AWRI1631</strain>
    </source>
</reference>
<accession>B5VTQ6</accession>
<protein>
    <recommendedName>
        <fullName>Required for respiratory growth protein 8, mitochondrial</fullName>
    </recommendedName>
</protein>
<feature type="chain" id="PRO_0000405468" description="Required for respiratory growth protein 8, mitochondrial">
    <location>
        <begin position="1"/>
        <end position="277"/>
    </location>
</feature>
<organism>
    <name type="scientific">Saccharomyces cerevisiae (strain AWRI1631)</name>
    <name type="common">Baker's yeast</name>
    <dbReference type="NCBI Taxonomy" id="545124"/>
    <lineage>
        <taxon>Eukaryota</taxon>
        <taxon>Fungi</taxon>
        <taxon>Dikarya</taxon>
        <taxon>Ascomycota</taxon>
        <taxon>Saccharomycotina</taxon>
        <taxon>Saccharomycetes</taxon>
        <taxon>Saccharomycetales</taxon>
        <taxon>Saccharomycetaceae</taxon>
        <taxon>Saccharomyces</taxon>
    </lineage>
</organism>
<proteinExistence type="inferred from homology"/>
<gene>
    <name type="primary">RRG8</name>
    <name type="ORF">AWRI1631_163700</name>
</gene>
<evidence type="ECO:0000250" key="1"/>
<evidence type="ECO:0000305" key="2"/>
<comment type="function">
    <text evidence="1">Required for respiratory activity and maintenance and expression of the mitochondrial genome.</text>
</comment>
<comment type="subcellular location">
    <subcellularLocation>
        <location evidence="1">Mitochondrion</location>
    </subcellularLocation>
</comment>
<comment type="similarity">
    <text evidence="2">Belongs to the RRG8 family.</text>
</comment>
<sequence>MGLPKSAYKKLLIDCPTRVINKNCAQRVKDVSPLITNFEKWSDKRKKLYFKDEEEMVGHFHLENFNLKNNLYGRLLASPMRAEKISKLKSCRELLIPLKVVPSTGKDQHADKDKLKLVPTLDYSKSYKSSYVLNSASIVQDNLAAATSWFPISVLQTSTPKSLEVDSSTFITEYNANLHAFIKARLSVIPNVGPSSINRVLLICDKRKTPPIEIQVVSHGKGLPITQSVFNLGYLHEPTLEAIVSKDAVTKGIYLDADNDKDLIKHLYSTLLFQSVN</sequence>
<name>RRG8_YEAS6</name>
<keyword id="KW-0496">Mitochondrion</keyword>